<organism>
    <name type="scientific">Edwardsiella ictaluri (strain 93-146)</name>
    <dbReference type="NCBI Taxonomy" id="634503"/>
    <lineage>
        <taxon>Bacteria</taxon>
        <taxon>Pseudomonadati</taxon>
        <taxon>Pseudomonadota</taxon>
        <taxon>Gammaproteobacteria</taxon>
        <taxon>Enterobacterales</taxon>
        <taxon>Hafniaceae</taxon>
        <taxon>Edwardsiella</taxon>
    </lineage>
</organism>
<evidence type="ECO:0000255" key="1">
    <source>
        <dbReference type="HAMAP-Rule" id="MF_00339"/>
    </source>
</evidence>
<keyword id="KW-0021">Allosteric enzyme</keyword>
<keyword id="KW-0067">ATP-binding</keyword>
<keyword id="KW-0963">Cytoplasm</keyword>
<keyword id="KW-0324">Glycolysis</keyword>
<keyword id="KW-0418">Kinase</keyword>
<keyword id="KW-0460">Magnesium</keyword>
<keyword id="KW-0479">Metal-binding</keyword>
<keyword id="KW-0547">Nucleotide-binding</keyword>
<keyword id="KW-0808">Transferase</keyword>
<sequence>MIKKIGVLTSGGDAPGMNAAIRGVVRAALSKGLDVYGIHDGYLGLYEGRIEQLDRHSVSDVINRGGTFLGSARFPEFRDEKVREKAVENMREFGLDALVVIGGDGSYLGAKRLTEMGFPCIGLPGTIDNDVAGTDYTIGYFTALETVVEAIDRLRDTSSSHQRISIVEVMGRYCGDLTLAAAIAGGCEYIVLPEVEFKREDLVEEIKVGITKGKKHAIVAITEHICDVDELAKFIEQETGRETRSTVLGHIQRGGAPVAYDRILASRMGAYSIELLLQGYGGRCVGIQNEKLVHHDIIDAVENMKRPFKGDWLDTAKMLF</sequence>
<protein>
    <recommendedName>
        <fullName evidence="1">ATP-dependent 6-phosphofructokinase</fullName>
        <shortName evidence="1">ATP-PFK</shortName>
        <shortName evidence="1">Phosphofructokinase</shortName>
        <ecNumber evidence="1">2.7.1.11</ecNumber>
    </recommendedName>
    <alternativeName>
        <fullName evidence="1">Phosphohexokinase</fullName>
    </alternativeName>
</protein>
<name>PFKA_EDWI9</name>
<comment type="function">
    <text evidence="1">Catalyzes the phosphorylation of D-fructose 6-phosphate to fructose 1,6-bisphosphate by ATP, the first committing step of glycolysis.</text>
</comment>
<comment type="catalytic activity">
    <reaction evidence="1">
        <text>beta-D-fructose 6-phosphate + ATP = beta-D-fructose 1,6-bisphosphate + ADP + H(+)</text>
        <dbReference type="Rhea" id="RHEA:16109"/>
        <dbReference type="ChEBI" id="CHEBI:15378"/>
        <dbReference type="ChEBI" id="CHEBI:30616"/>
        <dbReference type="ChEBI" id="CHEBI:32966"/>
        <dbReference type="ChEBI" id="CHEBI:57634"/>
        <dbReference type="ChEBI" id="CHEBI:456216"/>
        <dbReference type="EC" id="2.7.1.11"/>
    </reaction>
</comment>
<comment type="cofactor">
    <cofactor evidence="1">
        <name>Mg(2+)</name>
        <dbReference type="ChEBI" id="CHEBI:18420"/>
    </cofactor>
</comment>
<comment type="activity regulation">
    <text evidence="1">Allosterically activated by ADP and other diphosphonucleosides, and allosterically inhibited by phosphoenolpyruvate.</text>
</comment>
<comment type="pathway">
    <text evidence="1">Carbohydrate degradation; glycolysis; D-glyceraldehyde 3-phosphate and glycerone phosphate from D-glucose: step 3/4.</text>
</comment>
<comment type="subunit">
    <text evidence="1">Homotetramer.</text>
</comment>
<comment type="subcellular location">
    <subcellularLocation>
        <location evidence="1">Cytoplasm</location>
    </subcellularLocation>
</comment>
<comment type="similarity">
    <text evidence="1">Belongs to the phosphofructokinase type A (PFKA) family. ATP-dependent PFK group I subfamily. Prokaryotic clade 'B1' sub-subfamily.</text>
</comment>
<gene>
    <name evidence="1" type="primary">pfkA</name>
    <name type="ordered locus">NT01EI_3808</name>
</gene>
<dbReference type="EC" id="2.7.1.11" evidence="1"/>
<dbReference type="EMBL" id="CP001600">
    <property type="protein sequence ID" value="ACR70932.1"/>
    <property type="molecule type" value="Genomic_DNA"/>
</dbReference>
<dbReference type="RefSeq" id="WP_015872965.1">
    <property type="nucleotide sequence ID" value="NZ_CP169062.1"/>
</dbReference>
<dbReference type="SMR" id="C5BC26"/>
<dbReference type="STRING" id="67780.B6E78_10615"/>
<dbReference type="GeneID" id="69540633"/>
<dbReference type="KEGG" id="eic:NT01EI_3808"/>
<dbReference type="PATRIC" id="fig|634503.3.peg.3401"/>
<dbReference type="HOGENOM" id="CLU_020655_0_1_6"/>
<dbReference type="OrthoDB" id="9802503at2"/>
<dbReference type="UniPathway" id="UPA00109">
    <property type="reaction ID" value="UER00182"/>
</dbReference>
<dbReference type="Proteomes" id="UP000001485">
    <property type="component" value="Chromosome"/>
</dbReference>
<dbReference type="GO" id="GO:0005945">
    <property type="term" value="C:6-phosphofructokinase complex"/>
    <property type="evidence" value="ECO:0007669"/>
    <property type="project" value="TreeGrafter"/>
</dbReference>
<dbReference type="GO" id="GO:0003872">
    <property type="term" value="F:6-phosphofructokinase activity"/>
    <property type="evidence" value="ECO:0007669"/>
    <property type="project" value="UniProtKB-UniRule"/>
</dbReference>
<dbReference type="GO" id="GO:0016208">
    <property type="term" value="F:AMP binding"/>
    <property type="evidence" value="ECO:0007669"/>
    <property type="project" value="TreeGrafter"/>
</dbReference>
<dbReference type="GO" id="GO:0005524">
    <property type="term" value="F:ATP binding"/>
    <property type="evidence" value="ECO:0007669"/>
    <property type="project" value="UniProtKB-KW"/>
</dbReference>
<dbReference type="GO" id="GO:0070095">
    <property type="term" value="F:fructose-6-phosphate binding"/>
    <property type="evidence" value="ECO:0007669"/>
    <property type="project" value="TreeGrafter"/>
</dbReference>
<dbReference type="GO" id="GO:0042802">
    <property type="term" value="F:identical protein binding"/>
    <property type="evidence" value="ECO:0007669"/>
    <property type="project" value="TreeGrafter"/>
</dbReference>
<dbReference type="GO" id="GO:0046872">
    <property type="term" value="F:metal ion binding"/>
    <property type="evidence" value="ECO:0007669"/>
    <property type="project" value="UniProtKB-KW"/>
</dbReference>
<dbReference type="GO" id="GO:0048029">
    <property type="term" value="F:monosaccharide binding"/>
    <property type="evidence" value="ECO:0007669"/>
    <property type="project" value="TreeGrafter"/>
</dbReference>
<dbReference type="GO" id="GO:0061621">
    <property type="term" value="P:canonical glycolysis"/>
    <property type="evidence" value="ECO:0007669"/>
    <property type="project" value="TreeGrafter"/>
</dbReference>
<dbReference type="GO" id="GO:0030388">
    <property type="term" value="P:fructose 1,6-bisphosphate metabolic process"/>
    <property type="evidence" value="ECO:0007669"/>
    <property type="project" value="TreeGrafter"/>
</dbReference>
<dbReference type="GO" id="GO:0006002">
    <property type="term" value="P:fructose 6-phosphate metabolic process"/>
    <property type="evidence" value="ECO:0007669"/>
    <property type="project" value="InterPro"/>
</dbReference>
<dbReference type="CDD" id="cd00763">
    <property type="entry name" value="Bacterial_PFK"/>
    <property type="match status" value="1"/>
</dbReference>
<dbReference type="FunFam" id="3.40.50.450:FF:000001">
    <property type="entry name" value="ATP-dependent 6-phosphofructokinase"/>
    <property type="match status" value="1"/>
</dbReference>
<dbReference type="FunFam" id="3.40.50.460:FF:000002">
    <property type="entry name" value="ATP-dependent 6-phosphofructokinase"/>
    <property type="match status" value="1"/>
</dbReference>
<dbReference type="Gene3D" id="3.40.50.450">
    <property type="match status" value="1"/>
</dbReference>
<dbReference type="Gene3D" id="3.40.50.460">
    <property type="entry name" value="Phosphofructokinase domain"/>
    <property type="match status" value="1"/>
</dbReference>
<dbReference type="HAMAP" id="MF_00339">
    <property type="entry name" value="Phosphofructokinase_I_B1"/>
    <property type="match status" value="1"/>
</dbReference>
<dbReference type="InterPro" id="IPR022953">
    <property type="entry name" value="ATP_PFK"/>
</dbReference>
<dbReference type="InterPro" id="IPR012003">
    <property type="entry name" value="ATP_PFK_prok-type"/>
</dbReference>
<dbReference type="InterPro" id="IPR012828">
    <property type="entry name" value="PFKA_ATP_prok"/>
</dbReference>
<dbReference type="InterPro" id="IPR015912">
    <property type="entry name" value="Phosphofructokinase_CS"/>
</dbReference>
<dbReference type="InterPro" id="IPR000023">
    <property type="entry name" value="Phosphofructokinase_dom"/>
</dbReference>
<dbReference type="InterPro" id="IPR035966">
    <property type="entry name" value="PKF_sf"/>
</dbReference>
<dbReference type="NCBIfam" id="TIGR02482">
    <property type="entry name" value="PFKA_ATP"/>
    <property type="match status" value="1"/>
</dbReference>
<dbReference type="NCBIfam" id="NF002872">
    <property type="entry name" value="PRK03202.1"/>
    <property type="match status" value="1"/>
</dbReference>
<dbReference type="PANTHER" id="PTHR13697:SF4">
    <property type="entry name" value="ATP-DEPENDENT 6-PHOSPHOFRUCTOKINASE"/>
    <property type="match status" value="1"/>
</dbReference>
<dbReference type="PANTHER" id="PTHR13697">
    <property type="entry name" value="PHOSPHOFRUCTOKINASE"/>
    <property type="match status" value="1"/>
</dbReference>
<dbReference type="Pfam" id="PF00365">
    <property type="entry name" value="PFK"/>
    <property type="match status" value="1"/>
</dbReference>
<dbReference type="PIRSF" id="PIRSF000532">
    <property type="entry name" value="ATP_PFK_prok"/>
    <property type="match status" value="1"/>
</dbReference>
<dbReference type="PRINTS" id="PR00476">
    <property type="entry name" value="PHFRCTKINASE"/>
</dbReference>
<dbReference type="SUPFAM" id="SSF53784">
    <property type="entry name" value="Phosphofructokinase"/>
    <property type="match status" value="1"/>
</dbReference>
<dbReference type="PROSITE" id="PS00433">
    <property type="entry name" value="PHOSPHOFRUCTOKINASE"/>
    <property type="match status" value="1"/>
</dbReference>
<proteinExistence type="inferred from homology"/>
<reference key="1">
    <citation type="submission" date="2009-03" db="EMBL/GenBank/DDBJ databases">
        <title>Complete genome sequence of Edwardsiella ictaluri 93-146.</title>
        <authorList>
            <person name="Williams M.L."/>
            <person name="Gillaspy A.F."/>
            <person name="Dyer D.W."/>
            <person name="Thune R.L."/>
            <person name="Waldbieser G.C."/>
            <person name="Schuster S.C."/>
            <person name="Gipson J."/>
            <person name="Zaitshik J."/>
            <person name="Landry C."/>
            <person name="Lawrence M.L."/>
        </authorList>
    </citation>
    <scope>NUCLEOTIDE SEQUENCE [LARGE SCALE GENOMIC DNA]</scope>
    <source>
        <strain>93-146</strain>
    </source>
</reference>
<feature type="chain" id="PRO_1000205246" description="ATP-dependent 6-phosphofructokinase">
    <location>
        <begin position="1"/>
        <end position="320"/>
    </location>
</feature>
<feature type="active site" description="Proton acceptor" evidence="1">
    <location>
        <position position="128"/>
    </location>
</feature>
<feature type="binding site" evidence="1">
    <location>
        <position position="12"/>
    </location>
    <ligand>
        <name>ATP</name>
        <dbReference type="ChEBI" id="CHEBI:30616"/>
    </ligand>
</feature>
<feature type="binding site" evidence="1">
    <location>
        <begin position="22"/>
        <end position="26"/>
    </location>
    <ligand>
        <name>ADP</name>
        <dbReference type="ChEBI" id="CHEBI:456216"/>
        <note>allosteric activator; ligand shared between dimeric partners</note>
    </ligand>
</feature>
<feature type="binding site" evidence="1">
    <location>
        <begin position="73"/>
        <end position="74"/>
    </location>
    <ligand>
        <name>ATP</name>
        <dbReference type="ChEBI" id="CHEBI:30616"/>
    </ligand>
</feature>
<feature type="binding site" evidence="1">
    <location>
        <begin position="103"/>
        <end position="106"/>
    </location>
    <ligand>
        <name>ATP</name>
        <dbReference type="ChEBI" id="CHEBI:30616"/>
    </ligand>
</feature>
<feature type="binding site" evidence="1">
    <location>
        <position position="104"/>
    </location>
    <ligand>
        <name>Mg(2+)</name>
        <dbReference type="ChEBI" id="CHEBI:18420"/>
        <note>catalytic</note>
    </ligand>
</feature>
<feature type="binding site" description="in other chain" evidence="1">
    <location>
        <begin position="126"/>
        <end position="128"/>
    </location>
    <ligand>
        <name>substrate</name>
        <note>ligand shared between dimeric partners</note>
    </ligand>
</feature>
<feature type="binding site" description="in other chain" evidence="1">
    <location>
        <position position="155"/>
    </location>
    <ligand>
        <name>ADP</name>
        <dbReference type="ChEBI" id="CHEBI:456216"/>
        <note>allosteric activator; ligand shared between dimeric partners</note>
    </ligand>
</feature>
<feature type="binding site" evidence="1">
    <location>
        <position position="163"/>
    </location>
    <ligand>
        <name>substrate</name>
        <note>ligand shared between dimeric partners</note>
    </ligand>
</feature>
<feature type="binding site" description="in other chain" evidence="1">
    <location>
        <begin position="170"/>
        <end position="172"/>
    </location>
    <ligand>
        <name>substrate</name>
        <note>ligand shared between dimeric partners</note>
    </ligand>
</feature>
<feature type="binding site" description="in other chain" evidence="1">
    <location>
        <begin position="186"/>
        <end position="188"/>
    </location>
    <ligand>
        <name>ADP</name>
        <dbReference type="ChEBI" id="CHEBI:456216"/>
        <note>allosteric activator; ligand shared between dimeric partners</note>
    </ligand>
</feature>
<feature type="binding site" description="in other chain" evidence="1">
    <location>
        <position position="212"/>
    </location>
    <ligand>
        <name>ADP</name>
        <dbReference type="ChEBI" id="CHEBI:456216"/>
        <note>allosteric activator; ligand shared between dimeric partners</note>
    </ligand>
</feature>
<feature type="binding site" description="in other chain" evidence="1">
    <location>
        <begin position="214"/>
        <end position="216"/>
    </location>
    <ligand>
        <name>ADP</name>
        <dbReference type="ChEBI" id="CHEBI:456216"/>
        <note>allosteric activator; ligand shared between dimeric partners</note>
    </ligand>
</feature>
<feature type="binding site" description="in other chain" evidence="1">
    <location>
        <position position="223"/>
    </location>
    <ligand>
        <name>substrate</name>
        <note>ligand shared between dimeric partners</note>
    </ligand>
</feature>
<feature type="binding site" evidence="1">
    <location>
        <position position="244"/>
    </location>
    <ligand>
        <name>substrate</name>
        <note>ligand shared between dimeric partners</note>
    </ligand>
</feature>
<feature type="binding site" description="in other chain" evidence="1">
    <location>
        <begin position="250"/>
        <end position="253"/>
    </location>
    <ligand>
        <name>substrate</name>
        <note>ligand shared between dimeric partners</note>
    </ligand>
</feature>
<accession>C5BC26</accession>